<organism>
    <name type="scientific">Homo sapiens</name>
    <name type="common">Human</name>
    <dbReference type="NCBI Taxonomy" id="9606"/>
    <lineage>
        <taxon>Eukaryota</taxon>
        <taxon>Metazoa</taxon>
        <taxon>Chordata</taxon>
        <taxon>Craniata</taxon>
        <taxon>Vertebrata</taxon>
        <taxon>Euteleostomi</taxon>
        <taxon>Mammalia</taxon>
        <taxon>Eutheria</taxon>
        <taxon>Euarchontoglires</taxon>
        <taxon>Primates</taxon>
        <taxon>Haplorrhini</taxon>
        <taxon>Catarrhini</taxon>
        <taxon>Hominidae</taxon>
        <taxon>Homo</taxon>
    </lineage>
</organism>
<evidence type="ECO:0000250" key="1">
    <source>
        <dbReference type="UniProtKB" id="Q5I0I2"/>
    </source>
</evidence>
<evidence type="ECO:0000255" key="2"/>
<evidence type="ECO:0000255" key="3">
    <source>
        <dbReference type="PROSITE-ProRule" id="PRU00623"/>
    </source>
</evidence>
<evidence type="ECO:0000269" key="4">
    <source>
    </source>
</evidence>
<evidence type="ECO:0000269" key="5">
    <source>
    </source>
</evidence>
<evidence type="ECO:0000269" key="6">
    <source>
    </source>
</evidence>
<evidence type="ECO:0000269" key="7">
    <source>
    </source>
</evidence>
<evidence type="ECO:0000269" key="8">
    <source>
    </source>
</evidence>
<evidence type="ECO:0000269" key="9">
    <source>
    </source>
</evidence>
<evidence type="ECO:0000269" key="10">
    <source>
    </source>
</evidence>
<evidence type="ECO:0000269" key="11">
    <source>
    </source>
</evidence>
<evidence type="ECO:0000269" key="12">
    <source>
    </source>
</evidence>
<evidence type="ECO:0000269" key="13">
    <source>
    </source>
</evidence>
<evidence type="ECO:0000305" key="14"/>
<evidence type="ECO:0000312" key="15">
    <source>
        <dbReference type="HGNC" id="HGNC:28038"/>
    </source>
</evidence>
<gene>
    <name evidence="15" type="primary">MARCHF2</name>
    <name type="synonym">MARCH2</name>
    <name type="synonym">RNF172</name>
    <name type="ORF">HSPC240</name>
</gene>
<proteinExistence type="evidence at protein level"/>
<sequence>MTTGDCCHLPGSLCDCSGSPAFSKVVEATGLGPPQYVAQVTSRDGRLLSTVIRALDTPSDGPFCRICHEGANGECLLSPCGCTGTLGAVHKSCLEKWLSSSNTSYCELCHTEFAVEKRPRPLTEWLKDPGPRTEKRTLCCDMVCFLFITPLAAISGWLCLRGAQDHLRLHSQLEAVGLIALTIALFTIYVLWTLVSFRYHCQLYSEWRKTNQKVRLKIREADSPEGPQHSPLAAGLLKKVAEETPV</sequence>
<feature type="chain" id="PRO_0000055925" description="E3 ubiquitin-protein ligase MARCHF2">
    <location>
        <begin position="1"/>
        <end position="246"/>
    </location>
</feature>
<feature type="transmembrane region" description="Helical" evidence="2">
    <location>
        <begin position="138"/>
        <end position="158"/>
    </location>
</feature>
<feature type="transmembrane region" description="Helical" evidence="2">
    <location>
        <begin position="175"/>
        <end position="195"/>
    </location>
</feature>
<feature type="zinc finger region" description="RING-CH-type" evidence="3">
    <location>
        <begin position="56"/>
        <end position="116"/>
    </location>
</feature>
<feature type="region of interest" description="Required for inhibition of HIV-1 virus production and VSV G protein expression" evidence="11">
    <location>
        <begin position="56"/>
        <end position="116"/>
    </location>
</feature>
<feature type="region of interest" description="Required for interaction with IKBKG" evidence="13">
    <location>
        <begin position="121"/>
        <end position="246"/>
    </location>
</feature>
<feature type="binding site" evidence="3">
    <location>
        <position position="64"/>
    </location>
    <ligand>
        <name>Zn(2+)</name>
        <dbReference type="ChEBI" id="CHEBI:29105"/>
        <label>1</label>
    </ligand>
</feature>
<feature type="binding site" evidence="3">
    <location>
        <position position="67"/>
    </location>
    <ligand>
        <name>Zn(2+)</name>
        <dbReference type="ChEBI" id="CHEBI:29105"/>
        <label>1</label>
    </ligand>
</feature>
<feature type="binding site" evidence="3">
    <location>
        <position position="80"/>
    </location>
    <ligand>
        <name>Zn(2+)</name>
        <dbReference type="ChEBI" id="CHEBI:29105"/>
        <label>2</label>
    </ligand>
</feature>
<feature type="binding site" evidence="3">
    <location>
        <position position="82"/>
    </location>
    <ligand>
        <name>Zn(2+)</name>
        <dbReference type="ChEBI" id="CHEBI:29105"/>
        <label>2</label>
    </ligand>
</feature>
<feature type="binding site" evidence="3">
    <location>
        <position position="90"/>
    </location>
    <ligand>
        <name>Zn(2+)</name>
        <dbReference type="ChEBI" id="CHEBI:29105"/>
        <label>1</label>
    </ligand>
</feature>
<feature type="binding site" evidence="3">
    <location>
        <position position="93"/>
    </location>
    <ligand>
        <name>Zn(2+)</name>
        <dbReference type="ChEBI" id="CHEBI:29105"/>
        <label>1</label>
    </ligand>
</feature>
<feature type="binding site" evidence="3">
    <location>
        <position position="106"/>
    </location>
    <ligand>
        <name>Zn(2+)</name>
        <dbReference type="ChEBI" id="CHEBI:29105"/>
        <label>2</label>
    </ligand>
</feature>
<feature type="binding site" evidence="3">
    <location>
        <position position="109"/>
    </location>
    <ligand>
        <name>Zn(2+)</name>
        <dbReference type="ChEBI" id="CHEBI:29105"/>
        <label>2</label>
    </ligand>
</feature>
<feature type="splice variant" id="VSP_041478" description="In isoform 2." evidence="14">
    <location>
        <begin position="125"/>
        <end position="194"/>
    </location>
</feature>
<feature type="sequence variant" id="VAR_030303" description="In dbSNP:rs1133893." evidence="5">
    <original>A</original>
    <variation>T</variation>
    <location>
        <position position="54"/>
    </location>
</feature>
<feature type="sequence variant" id="VAR_053638" description="In dbSNP:rs34099346.">
    <original>R</original>
    <variation>P</variation>
    <location>
        <position position="219"/>
    </location>
</feature>
<feature type="mutagenesis site" description="Abolishes ubiquitination of ERGIC3 and CFTR, and degradation of CFTR; when associated with S-67. Reduces ubiquitination of DLG1; when associated with S-67, S-106 and S-109. Reduces inhibition of HIV-1 virus production and VSV G protein expression; when associated with S-67. Abolishes ubiquitination of IKBKG/NEMO; when associated with S-67 and Q-90." evidence="8 10 11 12 13">
    <original>C</original>
    <variation>S</variation>
    <location>
        <position position="64"/>
    </location>
</feature>
<feature type="mutagenesis site" description="Abolishes ubiquitination of ERGIC3 and CFTR, and degradation of CFTR; when associated with S-64. Reduces ubiquitination of DLG1; when associated with S-64, S-106 and S-109. Reduces inhibition of HIV-1 virus production and VSV G protein expression; when associated with S-64. Abolishes ubiquitination of IKBKG/NEMO; when associated with S-64 and Q-90." evidence="8 10 11 12 13">
    <original>C</original>
    <variation>S</variation>
    <location>
        <position position="67"/>
    </location>
</feature>
<feature type="mutagenesis site" description="Abolishes ubiquitination of IKBKG/NEMO; when associated with S-64 and S-67.">
    <original>H</original>
    <variation>Q</variation>
    <location>
        <position position="90"/>
    </location>
</feature>
<feature type="mutagenesis site" description="Reduces ubiquitination of DLG1. No effect on interaction with DLG1. Abolishes ubiquitination of and interaction with DLG1; when associated with 243-E--V-246 DEL." evidence="8">
    <original>W</original>
    <variation>A</variation>
    <location>
        <position position="97"/>
    </location>
</feature>
<feature type="mutagenesis site" description="Reduces ubiquitination of DLG1; when associated with S-64, S-67 and S-109." evidence="8">
    <original>C</original>
    <variation>S</variation>
    <location>
        <position position="106"/>
    </location>
</feature>
<feature type="mutagenesis site" description="Reduces ubiquitination of DLG1; when associated with S-64, S-67 and S-106." evidence="8">
    <original>C</original>
    <variation>S</variation>
    <location>
        <position position="109"/>
    </location>
</feature>
<feature type="mutagenesis site" description="Abolishes ubiquitination of and interaction with DLG1; when associated with A-97." evidence="8">
    <original>ETPV</original>
    <variation>AAAA</variation>
    <location>
        <begin position="243"/>
        <end position="246"/>
    </location>
</feature>
<keyword id="KW-0025">Alternative splicing</keyword>
<keyword id="KW-1003">Cell membrane</keyword>
<keyword id="KW-0963">Cytoplasm</keyword>
<keyword id="KW-0254">Endocytosis</keyword>
<keyword id="KW-0256">Endoplasmic reticulum</keyword>
<keyword id="KW-0967">Endosome</keyword>
<keyword id="KW-0333">Golgi apparatus</keyword>
<keyword id="KW-0458">Lysosome</keyword>
<keyword id="KW-0472">Membrane</keyword>
<keyword id="KW-0479">Metal-binding</keyword>
<keyword id="KW-1267">Proteomics identification</keyword>
<keyword id="KW-1185">Reference proteome</keyword>
<keyword id="KW-0808">Transferase</keyword>
<keyword id="KW-0812">Transmembrane</keyword>
<keyword id="KW-1133">Transmembrane helix</keyword>
<keyword id="KW-0833">Ubl conjugation pathway</keyword>
<keyword id="KW-0862">Zinc</keyword>
<keyword id="KW-0863">Zinc-finger</keyword>
<protein>
    <recommendedName>
        <fullName>E3 ubiquitin-protein ligase MARCHF2</fullName>
        <ecNumber evidence="4 7">2.3.2.27</ecNumber>
    </recommendedName>
    <alternativeName>
        <fullName>Membrane-associated RING finger protein 2</fullName>
    </alternativeName>
    <alternativeName>
        <fullName>Membrane-associated RING-CH protein II</fullName>
        <shortName>MARCH-II</shortName>
    </alternativeName>
    <alternativeName>
        <fullName evidence="15">RING finger protein 172</fullName>
    </alternativeName>
    <alternativeName>
        <fullName evidence="14">RING-type E3 ubiquitin transferase MARCHF2</fullName>
    </alternativeName>
</protein>
<name>MARH2_HUMAN</name>
<dbReference type="EC" id="2.3.2.27" evidence="4 7"/>
<dbReference type="EMBL" id="AB197929">
    <property type="protein sequence ID" value="BAD89359.1"/>
    <property type="molecule type" value="mRNA"/>
</dbReference>
<dbReference type="EMBL" id="AF151074">
    <property type="protein sequence ID" value="AAF36160.1"/>
    <property type="molecule type" value="mRNA"/>
</dbReference>
<dbReference type="EMBL" id="AC136469">
    <property type="status" value="NOT_ANNOTATED_CDS"/>
    <property type="molecule type" value="Genomic_DNA"/>
</dbReference>
<dbReference type="EMBL" id="BC032624">
    <property type="protein sequence ID" value="AAH32624.1"/>
    <property type="molecule type" value="mRNA"/>
</dbReference>
<dbReference type="EMBL" id="BC015910">
    <property type="protein sequence ID" value="AAH15910.1"/>
    <property type="molecule type" value="mRNA"/>
</dbReference>
<dbReference type="EMBL" id="BC111388">
    <property type="protein sequence ID" value="AAI11389.1"/>
    <property type="molecule type" value="mRNA"/>
</dbReference>
<dbReference type="CCDS" id="CCDS12202.1">
    <molecule id="Q9P0N8-1"/>
</dbReference>
<dbReference type="CCDS" id="CCDS32894.1">
    <molecule id="Q9P0N8-2"/>
</dbReference>
<dbReference type="RefSeq" id="NP_001005415.1">
    <molecule id="Q9P0N8-1"/>
    <property type="nucleotide sequence ID" value="NM_001005415.2"/>
</dbReference>
<dbReference type="RefSeq" id="NP_001005416.1">
    <molecule id="Q9P0N8-2"/>
    <property type="nucleotide sequence ID" value="NM_001005416.2"/>
</dbReference>
<dbReference type="RefSeq" id="NP_001356705.1">
    <molecule id="Q9P0N8-1"/>
    <property type="nucleotide sequence ID" value="NM_001369776.1"/>
</dbReference>
<dbReference type="RefSeq" id="NP_001356706.1">
    <molecule id="Q9P0N8-1"/>
    <property type="nucleotide sequence ID" value="NM_001369777.1"/>
</dbReference>
<dbReference type="RefSeq" id="NP_001356707.1">
    <molecule id="Q9P0N8-1"/>
    <property type="nucleotide sequence ID" value="NM_001369778.1"/>
</dbReference>
<dbReference type="RefSeq" id="NP_001356708.1">
    <molecule id="Q9P0N8-1"/>
    <property type="nucleotide sequence ID" value="NM_001369779.1"/>
</dbReference>
<dbReference type="RefSeq" id="NP_057580.3">
    <molecule id="Q9P0N8-1"/>
    <property type="nucleotide sequence ID" value="NM_016496.4"/>
</dbReference>
<dbReference type="RefSeq" id="XP_006722826.1">
    <property type="nucleotide sequence ID" value="XM_006722763.3"/>
</dbReference>
<dbReference type="RefSeq" id="XP_016882342.1">
    <property type="nucleotide sequence ID" value="XM_017026853.1"/>
</dbReference>
<dbReference type="SMR" id="Q9P0N8"/>
<dbReference type="BioGRID" id="119413">
    <property type="interactions" value="90"/>
</dbReference>
<dbReference type="CORUM" id="Q9P0N8"/>
<dbReference type="FunCoup" id="Q9P0N8">
    <property type="interactions" value="817"/>
</dbReference>
<dbReference type="IntAct" id="Q9P0N8">
    <property type="interactions" value="31"/>
</dbReference>
<dbReference type="STRING" id="9606.ENSP00000471536"/>
<dbReference type="TCDB" id="8.A.159.1.3">
    <property type="family name" value="the march ubiquitin ligase (march) family"/>
</dbReference>
<dbReference type="iPTMnet" id="Q9P0N8"/>
<dbReference type="PhosphoSitePlus" id="Q9P0N8"/>
<dbReference type="BioMuta" id="MARCH2"/>
<dbReference type="DMDM" id="57012977"/>
<dbReference type="MassIVE" id="Q9P0N8"/>
<dbReference type="PaxDb" id="9606-ENSP00000471536"/>
<dbReference type="PeptideAtlas" id="Q9P0N8"/>
<dbReference type="Antibodypedia" id="2987">
    <property type="antibodies" value="186 antibodies from 27 providers"/>
</dbReference>
<dbReference type="DNASU" id="51257"/>
<dbReference type="Ensembl" id="ENST00000215555.7">
    <molecule id="Q9P0N8-1"/>
    <property type="protein sequence ID" value="ENSP00000215555.2"/>
    <property type="gene ID" value="ENSG00000099785.11"/>
</dbReference>
<dbReference type="Ensembl" id="ENST00000381035.8">
    <molecule id="Q9P0N8-2"/>
    <property type="protein sequence ID" value="ENSP00000370423.3"/>
    <property type="gene ID" value="ENSG00000099785.11"/>
</dbReference>
<dbReference type="Ensembl" id="ENST00000602117.1">
    <molecule id="Q9P0N8-1"/>
    <property type="protein sequence ID" value="ENSP00000471536.1"/>
    <property type="gene ID" value="ENSG00000099785.11"/>
</dbReference>
<dbReference type="GeneID" id="51257"/>
<dbReference type="KEGG" id="hsa:51257"/>
<dbReference type="MANE-Select" id="ENST00000215555.7">
    <property type="protein sequence ID" value="ENSP00000215555.2"/>
    <property type="RefSeq nucleotide sequence ID" value="NM_001005415.2"/>
    <property type="RefSeq protein sequence ID" value="NP_001005415.1"/>
</dbReference>
<dbReference type="UCSC" id="uc002mjw.4">
    <molecule id="Q9P0N8-1"/>
    <property type="organism name" value="human"/>
</dbReference>
<dbReference type="AGR" id="HGNC:28038"/>
<dbReference type="CTD" id="51257"/>
<dbReference type="DisGeNET" id="51257"/>
<dbReference type="GeneCards" id="MARCHF2"/>
<dbReference type="HGNC" id="HGNC:28038">
    <property type="gene designation" value="MARCHF2"/>
</dbReference>
<dbReference type="HPA" id="ENSG00000099785">
    <property type="expression patterns" value="Low tissue specificity"/>
</dbReference>
<dbReference type="MIM" id="613332">
    <property type="type" value="gene"/>
</dbReference>
<dbReference type="neXtProt" id="NX_Q9P0N8"/>
<dbReference type="OpenTargets" id="ENSG00000099785"/>
<dbReference type="VEuPathDB" id="HostDB:ENSG00000099785"/>
<dbReference type="eggNOG" id="KOG1609">
    <property type="taxonomic scope" value="Eukaryota"/>
</dbReference>
<dbReference type="GeneTree" id="ENSGT00940000158995"/>
<dbReference type="HOGENOM" id="CLU_096532_0_1_1"/>
<dbReference type="InParanoid" id="Q9P0N8"/>
<dbReference type="OMA" id="ICHEGNN"/>
<dbReference type="OrthoDB" id="273089at2759"/>
<dbReference type="PAN-GO" id="Q9P0N8">
    <property type="GO annotations" value="2 GO annotations based on evolutionary models"/>
</dbReference>
<dbReference type="PhylomeDB" id="Q9P0N8"/>
<dbReference type="TreeFam" id="TF319557"/>
<dbReference type="PathwayCommons" id="Q9P0N8"/>
<dbReference type="SignaLink" id="Q9P0N8"/>
<dbReference type="SIGNOR" id="Q9P0N8"/>
<dbReference type="UniPathway" id="UPA00143"/>
<dbReference type="BioGRID-ORCS" id="51257">
    <property type="hits" value="8 hits in 926 CRISPR screens"/>
</dbReference>
<dbReference type="ChiTaRS" id="MARCH2">
    <property type="organism name" value="human"/>
</dbReference>
<dbReference type="GeneWiki" id="MARCH2"/>
<dbReference type="GenomeRNAi" id="51257"/>
<dbReference type="Pharos" id="Q9P0N8">
    <property type="development level" value="Tbio"/>
</dbReference>
<dbReference type="PRO" id="PR:Q9P0N8"/>
<dbReference type="Proteomes" id="UP000005640">
    <property type="component" value="Chromosome 19"/>
</dbReference>
<dbReference type="RNAct" id="Q9P0N8">
    <property type="molecule type" value="protein"/>
</dbReference>
<dbReference type="Bgee" id="ENSG00000099785">
    <property type="expression patterns" value="Expressed in apex of heart and 167 other cell types or tissues"/>
</dbReference>
<dbReference type="ExpressionAtlas" id="Q9P0N8">
    <property type="expression patterns" value="baseline and differential"/>
</dbReference>
<dbReference type="GO" id="GO:0005737">
    <property type="term" value="C:cytoplasm"/>
    <property type="evidence" value="ECO:0000314"/>
    <property type="project" value="UniProtKB"/>
</dbReference>
<dbReference type="GO" id="GO:0031410">
    <property type="term" value="C:cytoplasmic vesicle"/>
    <property type="evidence" value="ECO:0000314"/>
    <property type="project" value="UniProtKB"/>
</dbReference>
<dbReference type="GO" id="GO:0005829">
    <property type="term" value="C:cytosol"/>
    <property type="evidence" value="ECO:0000314"/>
    <property type="project" value="HPA"/>
</dbReference>
<dbReference type="GO" id="GO:0005783">
    <property type="term" value="C:endoplasmic reticulum"/>
    <property type="evidence" value="ECO:0000314"/>
    <property type="project" value="HPA"/>
</dbReference>
<dbReference type="GO" id="GO:0005789">
    <property type="term" value="C:endoplasmic reticulum membrane"/>
    <property type="evidence" value="ECO:0007669"/>
    <property type="project" value="UniProtKB-SubCell"/>
</dbReference>
<dbReference type="GO" id="GO:0010008">
    <property type="term" value="C:endosome membrane"/>
    <property type="evidence" value="ECO:0007669"/>
    <property type="project" value="UniProtKB-SubCell"/>
</dbReference>
<dbReference type="GO" id="GO:0000139">
    <property type="term" value="C:Golgi membrane"/>
    <property type="evidence" value="ECO:0000314"/>
    <property type="project" value="UniProtKB"/>
</dbReference>
<dbReference type="GO" id="GO:0005765">
    <property type="term" value="C:lysosomal membrane"/>
    <property type="evidence" value="ECO:0007669"/>
    <property type="project" value="UniProtKB-SubCell"/>
</dbReference>
<dbReference type="GO" id="GO:0005886">
    <property type="term" value="C:plasma membrane"/>
    <property type="evidence" value="ECO:0000314"/>
    <property type="project" value="UniProtKB"/>
</dbReference>
<dbReference type="GO" id="GO:0061630">
    <property type="term" value="F:ubiquitin protein ligase activity"/>
    <property type="evidence" value="ECO:0000314"/>
    <property type="project" value="UniProtKB"/>
</dbReference>
<dbReference type="GO" id="GO:0004842">
    <property type="term" value="F:ubiquitin-protein transferase activity"/>
    <property type="evidence" value="ECO:0000318"/>
    <property type="project" value="GO_Central"/>
</dbReference>
<dbReference type="GO" id="GO:0008270">
    <property type="term" value="F:zinc ion binding"/>
    <property type="evidence" value="ECO:0007669"/>
    <property type="project" value="UniProtKB-KW"/>
</dbReference>
<dbReference type="GO" id="GO:0140367">
    <property type="term" value="P:antibacterial innate immune response"/>
    <property type="evidence" value="ECO:0000250"/>
    <property type="project" value="UniProtKB"/>
</dbReference>
<dbReference type="GO" id="GO:0140374">
    <property type="term" value="P:antiviral innate immune response"/>
    <property type="evidence" value="ECO:0000250"/>
    <property type="project" value="UniProtKB"/>
</dbReference>
<dbReference type="GO" id="GO:0006897">
    <property type="term" value="P:endocytosis"/>
    <property type="evidence" value="ECO:0007669"/>
    <property type="project" value="UniProtKB-KW"/>
</dbReference>
<dbReference type="GO" id="GO:1905167">
    <property type="term" value="P:positive regulation of lysosomal protein catabolic process"/>
    <property type="evidence" value="ECO:0000315"/>
    <property type="project" value="UniProtKB"/>
</dbReference>
<dbReference type="GO" id="GO:0016567">
    <property type="term" value="P:protein ubiquitination"/>
    <property type="evidence" value="ECO:0000314"/>
    <property type="project" value="UniProtKB"/>
</dbReference>
<dbReference type="GO" id="GO:0044790">
    <property type="term" value="P:suppression of viral release by host"/>
    <property type="evidence" value="ECO:0000315"/>
    <property type="project" value="UniProtKB"/>
</dbReference>
<dbReference type="CDD" id="cd16808">
    <property type="entry name" value="RING_CH-C4HC3_MARCH2"/>
    <property type="match status" value="1"/>
</dbReference>
<dbReference type="FunFam" id="3.30.40.10:FF:000119">
    <property type="entry name" value="E3 ubiquitin-protein ligase MARCH2"/>
    <property type="match status" value="1"/>
</dbReference>
<dbReference type="Gene3D" id="3.30.40.10">
    <property type="entry name" value="Zinc/RING finger domain, C3HC4 (zinc finger)"/>
    <property type="match status" value="1"/>
</dbReference>
<dbReference type="InterPro" id="IPR001841">
    <property type="entry name" value="Znf_RING"/>
</dbReference>
<dbReference type="InterPro" id="IPR011016">
    <property type="entry name" value="Znf_RING-CH"/>
</dbReference>
<dbReference type="InterPro" id="IPR013083">
    <property type="entry name" value="Znf_RING/FYVE/PHD"/>
</dbReference>
<dbReference type="PANTHER" id="PTHR46065">
    <property type="entry name" value="E3 UBIQUITIN-PROTEIN LIGASE MARCH 2/3 FAMILY MEMBER"/>
    <property type="match status" value="1"/>
</dbReference>
<dbReference type="PANTHER" id="PTHR46065:SF4">
    <property type="entry name" value="E3 UBIQUITIN-PROTEIN LIGASE MARCHF2"/>
    <property type="match status" value="1"/>
</dbReference>
<dbReference type="Pfam" id="PF12906">
    <property type="entry name" value="RINGv"/>
    <property type="match status" value="1"/>
</dbReference>
<dbReference type="SMART" id="SM00744">
    <property type="entry name" value="RINGv"/>
    <property type="match status" value="1"/>
</dbReference>
<dbReference type="SUPFAM" id="SSF57850">
    <property type="entry name" value="RING/U-box"/>
    <property type="match status" value="1"/>
</dbReference>
<dbReference type="PROSITE" id="PS51292">
    <property type="entry name" value="ZF_RING_CH"/>
    <property type="match status" value="1"/>
</dbReference>
<reference key="1">
    <citation type="journal article" date="2005" name="Mol. Biol. Cell">
        <title>MARCH-II is a syntaxin-6-binding protein involved in endosomal trafficking.</title>
        <authorList>
            <person name="Nakamura N."/>
            <person name="Fukuda H."/>
            <person name="Kato A."/>
            <person name="Hirose S."/>
        </authorList>
    </citation>
    <scope>NUCLEOTIDE SEQUENCE [MRNA] (ISOFORM 1)</scope>
    <scope>FUNCTION</scope>
</reference>
<reference key="2">
    <citation type="journal article" date="2000" name="Genome Res.">
        <title>Cloning and functional analysis of cDNAs with open reading frames for 300 previously undefined genes expressed in CD34+ hematopoietic stem/progenitor cells.</title>
        <authorList>
            <person name="Zhang Q.-H."/>
            <person name="Ye M."/>
            <person name="Wu X.-Y."/>
            <person name="Ren S.-X."/>
            <person name="Zhao M."/>
            <person name="Zhao C.-J."/>
            <person name="Fu G."/>
            <person name="Shen Y."/>
            <person name="Fan H.-Y."/>
            <person name="Lu G."/>
            <person name="Zhong M."/>
            <person name="Xu X.-R."/>
            <person name="Han Z.-G."/>
            <person name="Zhang J.-W."/>
            <person name="Tao J."/>
            <person name="Huang Q.-H."/>
            <person name="Zhou J."/>
            <person name="Hu G.-X."/>
            <person name="Gu J."/>
            <person name="Chen S.-J."/>
            <person name="Chen Z."/>
        </authorList>
    </citation>
    <scope>NUCLEOTIDE SEQUENCE [LARGE SCALE MRNA] (ISOFORM 1)</scope>
    <source>
        <tissue>Umbilical cord blood</tissue>
    </source>
</reference>
<reference key="3">
    <citation type="journal article" date="2004" name="Nature">
        <title>The DNA sequence and biology of human chromosome 19.</title>
        <authorList>
            <person name="Grimwood J."/>
            <person name="Gordon L.A."/>
            <person name="Olsen A.S."/>
            <person name="Terry A."/>
            <person name="Schmutz J."/>
            <person name="Lamerdin J.E."/>
            <person name="Hellsten U."/>
            <person name="Goodstein D."/>
            <person name="Couronne O."/>
            <person name="Tran-Gyamfi M."/>
            <person name="Aerts A."/>
            <person name="Altherr M."/>
            <person name="Ashworth L."/>
            <person name="Bajorek E."/>
            <person name="Black S."/>
            <person name="Branscomb E."/>
            <person name="Caenepeel S."/>
            <person name="Carrano A.V."/>
            <person name="Caoile C."/>
            <person name="Chan Y.M."/>
            <person name="Christensen M."/>
            <person name="Cleland C.A."/>
            <person name="Copeland A."/>
            <person name="Dalin E."/>
            <person name="Dehal P."/>
            <person name="Denys M."/>
            <person name="Detter J.C."/>
            <person name="Escobar J."/>
            <person name="Flowers D."/>
            <person name="Fotopulos D."/>
            <person name="Garcia C."/>
            <person name="Georgescu A.M."/>
            <person name="Glavina T."/>
            <person name="Gomez M."/>
            <person name="Gonzales E."/>
            <person name="Groza M."/>
            <person name="Hammon N."/>
            <person name="Hawkins T."/>
            <person name="Haydu L."/>
            <person name="Ho I."/>
            <person name="Huang W."/>
            <person name="Israni S."/>
            <person name="Jett J."/>
            <person name="Kadner K."/>
            <person name="Kimball H."/>
            <person name="Kobayashi A."/>
            <person name="Larionov V."/>
            <person name="Leem S.-H."/>
            <person name="Lopez F."/>
            <person name="Lou Y."/>
            <person name="Lowry S."/>
            <person name="Malfatti S."/>
            <person name="Martinez D."/>
            <person name="McCready P.M."/>
            <person name="Medina C."/>
            <person name="Morgan J."/>
            <person name="Nelson K."/>
            <person name="Nolan M."/>
            <person name="Ovcharenko I."/>
            <person name="Pitluck S."/>
            <person name="Pollard M."/>
            <person name="Popkie A.P."/>
            <person name="Predki P."/>
            <person name="Quan G."/>
            <person name="Ramirez L."/>
            <person name="Rash S."/>
            <person name="Retterer J."/>
            <person name="Rodriguez A."/>
            <person name="Rogers S."/>
            <person name="Salamov A."/>
            <person name="Salazar A."/>
            <person name="She X."/>
            <person name="Smith D."/>
            <person name="Slezak T."/>
            <person name="Solovyev V."/>
            <person name="Thayer N."/>
            <person name="Tice H."/>
            <person name="Tsai M."/>
            <person name="Ustaszewska A."/>
            <person name="Vo N."/>
            <person name="Wagner M."/>
            <person name="Wheeler J."/>
            <person name="Wu K."/>
            <person name="Xie G."/>
            <person name="Yang J."/>
            <person name="Dubchak I."/>
            <person name="Furey T.S."/>
            <person name="DeJong P."/>
            <person name="Dickson M."/>
            <person name="Gordon D."/>
            <person name="Eichler E.E."/>
            <person name="Pennacchio L.A."/>
            <person name="Richardson P."/>
            <person name="Stubbs L."/>
            <person name="Rokhsar D.S."/>
            <person name="Myers R.M."/>
            <person name="Rubin E.M."/>
            <person name="Lucas S.M."/>
        </authorList>
    </citation>
    <scope>NUCLEOTIDE SEQUENCE [LARGE SCALE GENOMIC DNA]</scope>
</reference>
<reference key="4">
    <citation type="journal article" date="2004" name="Genome Res.">
        <title>The status, quality, and expansion of the NIH full-length cDNA project: the Mammalian Gene Collection (MGC).</title>
        <authorList>
            <consortium name="The MGC Project Team"/>
        </authorList>
    </citation>
    <scope>NUCLEOTIDE SEQUENCE [LARGE SCALE MRNA] (ISOFORM 1)</scope>
    <scope>VARIANT THR-54</scope>
    <source>
        <tissue>Brain</tissue>
        <tissue>Skin</tissue>
    </source>
</reference>
<reference key="5">
    <citation type="journal article" date="2004" name="J. Virol.">
        <title>Downregulation of major histocompatibility complex class I by human ubiquitin ligases related to viral immune evasion proteins.</title>
        <authorList>
            <person name="Bartee E."/>
            <person name="Mansouri M."/>
            <person name="Hovey Nerenberg B.T."/>
            <person name="Gouveia K."/>
            <person name="Frueh K."/>
        </authorList>
    </citation>
    <scope>FUNCTION</scope>
    <scope>CATALYTIC ACTIVITY</scope>
    <scope>TISSUE SPECIFICITY</scope>
    <scope>SUBCELLULAR LOCATION</scope>
</reference>
<reference key="6">
    <citation type="journal article" date="2006" name="J. Biochem.">
        <title>MARCH-III is a novel component of endosomes with properties similar to those of MARCH-II.</title>
        <authorList>
            <person name="Fukuda H."/>
            <person name="Nakamura N."/>
            <person name="Hirose S."/>
        </authorList>
    </citation>
    <scope>FUNCTION</scope>
    <scope>CATALYTIC ACTIVITY</scope>
    <scope>INTERACTION WITH MARCHF3</scope>
</reference>
<reference key="7">
    <citation type="journal article" date="2008" name="Cell. Signal.">
        <title>DLG1 is an anchor for the E3 ligase MARCH2 at sites of cell-cell contact.</title>
        <authorList>
            <person name="Cao Z."/>
            <person name="Huett A."/>
            <person name="Kuballa P."/>
            <person name="Giallourakis C."/>
            <person name="Xavier R.J."/>
        </authorList>
    </citation>
    <scope>FUNCTION</scope>
    <scope>INTERACTION WITH DLG1</scope>
    <scope>MUTAGENESIS OF CYS-64; CYS-67; TRP-97; CYS-106; CYS-109 AND 243-GLU--VAL-246</scope>
</reference>
<reference key="8">
    <citation type="journal article" date="2012" name="J. Cell Biol.">
        <title>MARCH2 promotes endocytosis and lysosomal sorting of carvedilol-bound beta(2)-adrenergic receptors.</title>
        <authorList>
            <person name="Han S.O."/>
            <person name="Xiao K."/>
            <person name="Kim J."/>
            <person name="Wu J.H."/>
            <person name="Wisler J.W."/>
            <person name="Nakamura N."/>
            <person name="Freedman N.J."/>
            <person name="Shenoy S.K."/>
        </authorList>
    </citation>
    <scope>INTERACTION WITH ADRB2</scope>
    <scope>SUBCELLULAR LOCATION</scope>
</reference>
<reference key="9">
    <citation type="journal article" date="2013" name="PLoS ONE">
        <title>Ubiquitination and degradation of CFTR by the E3 ubiquitin ligase MARCH2 through its association with adaptor proteins CAL and STX6.</title>
        <authorList>
            <person name="Cheng J."/>
            <person name="Guggino W."/>
        </authorList>
    </citation>
    <scope>FUNCTION</scope>
    <scope>INTERACTION WITH CFTR; STX6 AND GOPC</scope>
    <scope>SUBCELLULAR LOCATION</scope>
    <scope>MUTAGENESIS OF CYS-64; CYS-67 AND 244-TYR--VAL-246</scope>
</reference>
<reference key="10">
    <citation type="journal article" date="2018" name="Virology">
        <title>MARCH2 is upregulated in HIV-1 infection and inhibits HIV-1 production through envelope protein translocation or degradation.</title>
        <authorList>
            <person name="Zhang Y."/>
            <person name="Lu J."/>
            <person name="Liu X."/>
        </authorList>
    </citation>
    <scope>FUNCTION (MICROBIAL INFECTION)</scope>
    <scope>INDUCTION BY HIV-1 INFECTION</scope>
    <scope>MUTAGENESIS OF CYS-64 AND CYS-67</scope>
</reference>
<reference key="11">
    <citation type="journal article" date="2019" name="J. Biol. Chem.">
        <title>The E3 ubiquitin ligase MARCH2 regulates ERGIC3-dependent trafficking of secretory proteins.</title>
        <authorList>
            <person name="Yoo W."/>
            <person name="Cho E.B."/>
            <person name="Kim S."/>
            <person name="Yoon J.B."/>
        </authorList>
    </citation>
    <scope>FUNCTION</scope>
    <scope>INTERACTION WITH ERGIC3</scope>
    <scope>MUTAGENESIS OF CYS-64 AND CYS-67</scope>
</reference>
<reference key="12">
    <citation type="journal article" date="2020" name="EMBO J.">
        <title>Negative regulation of NEMO signaling by the ubiquitin E3 ligase MARCH2.</title>
        <authorList>
            <person name="Chathuranga K."/>
            <person name="Kim T.H."/>
            <person name="Lee H."/>
            <person name="Park J.S."/>
            <person name="Kim J.H."/>
            <person name="Chathuranga W.A.G."/>
            <person name="Ekanayaka P."/>
            <person name="Choi Y.J."/>
            <person name="Lee C.H."/>
            <person name="Kim C.J."/>
            <person name="Jung J.U."/>
            <person name="Lee J.S."/>
        </authorList>
    </citation>
    <scope>FUNCTION</scope>
    <scope>CATALYTIC ACTIVITY</scope>
    <scope>INTERACTION WITH IKBKG</scope>
    <scope>SUBCELLULAR LOCATION</scope>
    <scope>MUTAGENESIS OF CYS-64; CYS-67 AND HIS-90</scope>
</reference>
<accession>Q9P0N8</accession>
<accession>A6NP10</accession>
<accession>Q5H785</accession>
<accession>Q8N5A3</accession>
<accession>Q96B78</accession>
<comment type="function">
    <text evidence="4 6 7 8 10 12 13">E3 ubiquitin-protein ligase that may mediate ubiquitination of TFRC and CD86, and promote their subsequent endocytosis and sorting to lysosomes via multivesicular bodies. E3 ubiquitin ligases accept ubiquitin from an E2 ubiquitin-conjugating enzyme in the form of a thioester and then directly transfer the ubiquitin to targeted substrates (PubMed:14722266, PubMed:16428329). Together with GOPC/CAL mediates the ubiquitination and lysosomal degradation of CFTR (PubMed:23818989). Ubiquitinates and therefore mediates the degradation of DLG1 (PubMed:17980554). Regulates the intracellular trafficking and secretion of alpha1-antitrypsin/SERPINA1 and HP/haptoglobin via ubiquitination and degradation of the cargo receptor ERGIC3 (PubMed:31142615). Negatively regulates the antiviral and antibacterial immune response by repression of the NF-kB and type 1 IFN signaling pathways, via MARCHF2-mediated K48-linked polyubiquitination of IKBKG/NEMO, resulting in its proteasomal degradation (PubMed:32935379). May be involved in endosomal trafficking through interaction with STX6 (PubMed:15689499).</text>
</comment>
<comment type="function">
    <text evidence="11">(Microbial infection) Positively regulates the degradation of Vesicular stomatitis virus (VSV) G protein via the lysosomal degradation pathway (PubMed:29573664). Represses HIV-1 viral production and may inhibit the translocation of HIV-1 env to the cell surface, resulting in decreased viral cell-cell transmission (PubMed:29573664).</text>
</comment>
<comment type="catalytic activity">
    <reaction evidence="4 7 13">
        <text>S-ubiquitinyl-[E2 ubiquitin-conjugating enzyme]-L-cysteine + [acceptor protein]-L-lysine = [E2 ubiquitin-conjugating enzyme]-L-cysteine + N(6)-ubiquitinyl-[acceptor protein]-L-lysine.</text>
        <dbReference type="EC" id="2.3.2.27"/>
    </reaction>
</comment>
<comment type="pathway">
    <text evidence="8 10 12">Protein modification; protein ubiquitination.</text>
</comment>
<comment type="subunit">
    <text evidence="7 8 9 10 12 13">Interacts with STX6; the interaction promotes MARCHF2-mediated ubiquitination and degradation of CFTR (PubMed:23818989). Interacts with MARCHF3 (PubMed:16428329). Interacts with GOPC/CAL; the interaction leads to CFTR ubiquitination and degradation (PubMed:23818989). Interacts with CFTR; the interaction leads to CFTR ubiqtuitination and degradation (PubMed:23818989). Interacts (via PDZ domain) with DLG1 (via PDZ domains); the interaction leads to DLG1 ubiqtuitination and degradation (PubMed:17980554). Interacts with ERGIC3 (PubMed:31142615). Interacts with ADRB2 (PubMed:23166351). Interacts with IKBKG/NEMO; during the late stages of macrophage viral and bacterial infection; the interaction leads to ubiquitination and degradation of IKBKG/NEMO (PubMed:32935379).</text>
</comment>
<comment type="interaction">
    <interactant intactId="EBI-10317612">
        <id>Q9P0N8</id>
    </interactant>
    <interactant intactId="EBI-13059134">
        <id>Q13520</id>
        <label>AQP6</label>
    </interactant>
    <organismsDiffer>false</organismsDiffer>
    <experiments>3</experiments>
</comment>
<comment type="interaction">
    <interactant intactId="EBI-10317612">
        <id>Q9P0N8</id>
    </interactant>
    <interactant intactId="EBI-2873970">
        <id>P13236</id>
        <label>CCL4</label>
    </interactant>
    <organismsDiffer>false</organismsDiffer>
    <experiments>3</experiments>
</comment>
<comment type="interaction">
    <interactant intactId="EBI-10317612">
        <id>Q9P0N8</id>
    </interactant>
    <interactant intactId="EBI-7797864">
        <id>P11912</id>
        <label>CD79A</label>
    </interactant>
    <organismsDiffer>false</organismsDiffer>
    <experiments>3</experiments>
</comment>
<comment type="interaction">
    <interactant intactId="EBI-10317612">
        <id>Q9P0N8</id>
    </interactant>
    <interactant intactId="EBI-6942903">
        <id>Q96BA8</id>
        <label>CREB3L1</label>
    </interactant>
    <organismsDiffer>false</organismsDiffer>
    <experiments>3</experiments>
</comment>
<comment type="interaction">
    <interactant intactId="EBI-10317612">
        <id>Q9P0N8</id>
    </interactant>
    <interactant intactId="EBI-781551">
        <id>Q9Y282</id>
        <label>ERGIC3</label>
    </interactant>
    <organismsDiffer>false</organismsDiffer>
    <experiments>8</experiments>
</comment>
<comment type="interaction">
    <interactant intactId="EBI-10317612">
        <id>Q9P0N8</id>
    </interactant>
    <interactant intactId="EBI-742600">
        <id>Q9Y624</id>
        <label>F11R</label>
    </interactant>
    <organismsDiffer>false</organismsDiffer>
    <experiments>3</experiments>
</comment>
<comment type="interaction">
    <interactant intactId="EBI-10317612">
        <id>Q9P0N8</id>
    </interactant>
    <interactant intactId="EBI-18304435">
        <id>Q5JX71</id>
        <label>FAM209A</label>
    </interactant>
    <organismsDiffer>false</organismsDiffer>
    <experiments>3</experiments>
</comment>
<comment type="interaction">
    <interactant intactId="EBI-10317612">
        <id>Q9P0N8</id>
    </interactant>
    <interactant intactId="EBI-743099">
        <id>Q969F0</id>
        <label>FATE1</label>
    </interactant>
    <organismsDiffer>false</organismsDiffer>
    <experiments>6</experiments>
</comment>
<comment type="interaction">
    <interactant intactId="EBI-10317612">
        <id>Q9P0N8</id>
    </interactant>
    <interactant intactId="EBI-17458373">
        <id>P48165</id>
        <label>GJA8</label>
    </interactant>
    <organismsDiffer>false</organismsDiffer>
    <experiments>3</experiments>
</comment>
<comment type="interaction">
    <interactant intactId="EBI-10317612">
        <id>Q9P0N8</id>
    </interactant>
    <interactant intactId="EBI-11721746">
        <id>Q8TED1</id>
        <label>GPX8</label>
    </interactant>
    <organismsDiffer>false</organismsDiffer>
    <experiments>3</experiments>
</comment>
<comment type="interaction">
    <interactant intactId="EBI-10317612">
        <id>Q9P0N8</id>
    </interactant>
    <interactant intactId="EBI-749265">
        <id>Q8N6L0</id>
        <label>KASH5</label>
    </interactant>
    <organismsDiffer>false</organismsDiffer>
    <experiments>3</experiments>
</comment>
<comment type="interaction">
    <interactant intactId="EBI-10317612">
        <id>Q9P0N8</id>
    </interactant>
    <interactant intactId="EBI-10173166">
        <id>Q5T700</id>
        <label>LDLRAD1</label>
    </interactant>
    <organismsDiffer>false</organismsDiffer>
    <experiments>7</experiments>
</comment>
<comment type="interaction">
    <interactant intactId="EBI-10317612">
        <id>Q9P0N8</id>
    </interactant>
    <interactant intactId="EBI-17443382">
        <id>Q9BXB1-2</id>
        <label>LGR4</label>
    </interactant>
    <organismsDiffer>false</organismsDiffer>
    <experiments>3</experiments>
</comment>
<comment type="interaction">
    <interactant intactId="EBI-10317612">
        <id>Q9P0N8</id>
    </interactant>
    <interactant intactId="EBI-17263240">
        <id>P15941-11</id>
        <label>MUC1</label>
    </interactant>
    <organismsDiffer>false</organismsDiffer>
    <experiments>3</experiments>
</comment>
<comment type="interaction">
    <interactant intactId="EBI-10317612">
        <id>Q9P0N8</id>
    </interactant>
    <interactant intactId="EBI-594836">
        <id>O00623</id>
        <label>PEX12</label>
    </interactant>
    <organismsDiffer>false</organismsDiffer>
    <experiments>3</experiments>
</comment>
<comment type="interaction">
    <interactant intactId="EBI-10317612">
        <id>Q9P0N8</id>
    </interactant>
    <interactant intactId="EBI-12955265">
        <id>Q96GM1</id>
        <label>PLPPR2</label>
    </interactant>
    <organismsDiffer>false</organismsDiffer>
    <experiments>3</experiments>
</comment>
<comment type="interaction">
    <interactant intactId="EBI-10317612">
        <id>Q9P0N8</id>
    </interactant>
    <interactant intactId="EBI-17247926">
        <id>Q9NY72</id>
        <label>SCN3B</label>
    </interactant>
    <organismsDiffer>false</organismsDiffer>
    <experiments>3</experiments>
</comment>
<comment type="interaction">
    <interactant intactId="EBI-10317612">
        <id>Q9P0N8</id>
    </interactant>
    <interactant intactId="EBI-17280858">
        <id>Q8WWF3</id>
        <label>SSMEM1</label>
    </interactant>
    <organismsDiffer>false</organismsDiffer>
    <experiments>3</experiments>
</comment>
<comment type="interaction">
    <interactant intactId="EBI-10317612">
        <id>Q9P0N8</id>
    </interactant>
    <interactant intactId="EBI-7131783">
        <id>Q8N205</id>
        <label>SYNE4</label>
    </interactant>
    <organismsDiffer>false</organismsDiffer>
    <experiments>3</experiments>
</comment>
<comment type="interaction">
    <interactant intactId="EBI-10317612">
        <id>Q9P0N8</id>
    </interactant>
    <interactant intactId="EBI-2821497">
        <id>Q9BVX2</id>
        <label>TMEM106C</label>
    </interactant>
    <organismsDiffer>false</organismsDiffer>
    <experiments>3</experiments>
</comment>
<comment type="interaction">
    <interactant intactId="EBI-10317612">
        <id>Q9P0N8</id>
    </interactant>
    <interactant intactId="EBI-11724423">
        <id>Q7Z7N9</id>
        <label>TMEM179B</label>
    </interactant>
    <organismsDiffer>false</organismsDiffer>
    <experiments>3</experiments>
</comment>
<comment type="interaction">
    <interactant intactId="EBI-10317612">
        <id>Q9P0N8</id>
    </interactant>
    <interactant intactId="EBI-18178701">
        <id>Q4KMG9</id>
        <label>TMEM52B</label>
    </interactant>
    <organismsDiffer>false</organismsDiffer>
    <experiments>3</experiments>
</comment>
<comment type="interaction">
    <interactant intactId="EBI-10317612">
        <id>Q9P0N8</id>
    </interactant>
    <interactant intactId="EBI-2548832">
        <id>Q8N661</id>
        <label>TMEM86B</label>
    </interactant>
    <organismsDiffer>false</organismsDiffer>
    <experiments>3</experiments>
</comment>
<comment type="interaction">
    <interactant intactId="EBI-10317612">
        <id>Q9P0N8</id>
    </interactant>
    <interactant intactId="EBI-2466403">
        <id>O95859</id>
        <label>TSPAN12</label>
    </interactant>
    <organismsDiffer>false</organismsDiffer>
    <experiments>3</experiments>
</comment>
<comment type="interaction">
    <interactant intactId="EBI-10317612">
        <id>Q9P0N8</id>
    </interactant>
    <interactant intactId="EBI-12195249">
        <id>Q5TGU0</id>
        <label>TSPO2</label>
    </interactant>
    <organismsDiffer>false</organismsDiffer>
    <experiments>3</experiments>
</comment>
<comment type="subcellular location">
    <subcellularLocation>
        <location evidence="4">Endoplasmic reticulum membrane</location>
        <topology evidence="1">Multi-pass membrane protein</topology>
    </subcellularLocation>
    <subcellularLocation>
        <location evidence="4">Lysosome membrane</location>
        <topology evidence="2">Multi-pass membrane protein</topology>
    </subcellularLocation>
    <subcellularLocation>
        <location evidence="9">Endosome membrane</location>
        <topology evidence="1">Multi-pass membrane protein</topology>
    </subcellularLocation>
    <subcellularLocation>
        <location evidence="10">Golgi apparatus membrane</location>
        <topology evidence="2">Multi-pass membrane protein</topology>
    </subcellularLocation>
    <subcellularLocation>
        <location evidence="13">Cytoplasm</location>
    </subcellularLocation>
    <subcellularLocation>
        <location evidence="13">Cell membrane</location>
        <topology evidence="13">Multi-pass membrane protein</topology>
    </subcellularLocation>
</comment>
<comment type="alternative products">
    <event type="alternative splicing"/>
    <isoform>
        <id>Q9P0N8-1</id>
        <name>1</name>
        <sequence type="displayed"/>
    </isoform>
    <isoform>
        <id>Q9P0N8-2</id>
        <name>2</name>
        <sequence type="described" ref="VSP_041478"/>
    </isoform>
</comment>
<comment type="tissue specificity">
    <text evidence="4">Broadly expressed.</text>
</comment>
<comment type="induction">
    <text evidence="11">(Microbial infection) Induced by HIV-1 infection.</text>
</comment>
<comment type="domain">
    <text>The RING-CH-type zinc finger domain is required for E3 ligase activity.</text>
</comment>